<name>F216B_HUMAN</name>
<organism>
    <name type="scientific">Homo sapiens</name>
    <name type="common">Human</name>
    <dbReference type="NCBI Taxonomy" id="9606"/>
    <lineage>
        <taxon>Eukaryota</taxon>
        <taxon>Metazoa</taxon>
        <taxon>Chordata</taxon>
        <taxon>Craniata</taxon>
        <taxon>Vertebrata</taxon>
        <taxon>Euteleostomi</taxon>
        <taxon>Mammalia</taxon>
        <taxon>Eutheria</taxon>
        <taxon>Euarchontoglires</taxon>
        <taxon>Primates</taxon>
        <taxon>Haplorrhini</taxon>
        <taxon>Catarrhini</taxon>
        <taxon>Hominidae</taxon>
        <taxon>Homo</taxon>
    </lineage>
</organism>
<sequence length="139" mass="16362">MGQNWKRQQKLWNVPQLPFIRVPPSIYDTSLLKALNQGQQRYFYSIMRIYNSRPQWEALQTRYIHSLQHQQLLGYITQREALSYALVLRDSTKRASAKVAPQRTIPRKTSAMTRRCPSVLPVSVVLPRAQSKRRQVLRN</sequence>
<proteinExistence type="evidence at protein level"/>
<evidence type="ECO:0000305" key="1"/>
<feature type="chain" id="PRO_0000263728" description="Protein FAM216B">
    <location>
        <begin position="1"/>
        <end position="139"/>
    </location>
</feature>
<feature type="sequence variant" id="VAR_033743" description="In dbSNP:rs35889214.">
    <original>R</original>
    <variation>C</variation>
    <location>
        <position position="134"/>
    </location>
</feature>
<dbReference type="EMBL" id="AK098238">
    <property type="protein sequence ID" value="BAC05268.1"/>
    <property type="molecule type" value="mRNA"/>
</dbReference>
<dbReference type="EMBL" id="AL138819">
    <property type="status" value="NOT_ANNOTATED_CDS"/>
    <property type="molecule type" value="Genomic_DNA"/>
</dbReference>
<dbReference type="EMBL" id="CH471075">
    <property type="protein sequence ID" value="EAX08682.1"/>
    <property type="molecule type" value="Genomic_DNA"/>
</dbReference>
<dbReference type="EMBL" id="BC093659">
    <property type="protein sequence ID" value="AAH93659.1"/>
    <property type="molecule type" value="mRNA"/>
</dbReference>
<dbReference type="EMBL" id="BC112237">
    <property type="protein sequence ID" value="AAI12238.1"/>
    <property type="molecule type" value="mRNA"/>
</dbReference>
<dbReference type="CCDS" id="CCDS9386.1"/>
<dbReference type="RefSeq" id="NP_001305861.1">
    <property type="nucleotide sequence ID" value="NM_001318932.2"/>
</dbReference>
<dbReference type="RefSeq" id="NP_872314.1">
    <property type="nucleotide sequence ID" value="NM_182508.3"/>
</dbReference>
<dbReference type="BioGRID" id="126878">
    <property type="interactions" value="1"/>
</dbReference>
<dbReference type="STRING" id="9606.ENSP00000445786"/>
<dbReference type="BioMuta" id="FAM216B"/>
<dbReference type="DMDM" id="74729231"/>
<dbReference type="MassIVE" id="Q8N7L0"/>
<dbReference type="PaxDb" id="9606-ENSP00000445786"/>
<dbReference type="PeptideAtlas" id="Q8N7L0"/>
<dbReference type="ProteomicsDB" id="72305"/>
<dbReference type="Antibodypedia" id="42211">
    <property type="antibodies" value="46 antibodies from 17 providers"/>
</dbReference>
<dbReference type="DNASU" id="144809"/>
<dbReference type="Ensembl" id="ENST00000313851.3">
    <property type="protein sequence ID" value="ENSP00000319336.1"/>
    <property type="gene ID" value="ENSG00000179813.7"/>
</dbReference>
<dbReference type="Ensembl" id="ENST00000537894.5">
    <property type="protein sequence ID" value="ENSP00000445786.1"/>
    <property type="gene ID" value="ENSG00000179813.7"/>
</dbReference>
<dbReference type="GeneID" id="144809"/>
<dbReference type="KEGG" id="hsa:144809"/>
<dbReference type="MANE-Select" id="ENST00000313851.3">
    <property type="protein sequence ID" value="ENSP00000319336.1"/>
    <property type="RefSeq nucleotide sequence ID" value="NM_001318932.2"/>
    <property type="RefSeq protein sequence ID" value="NP_001305861.1"/>
</dbReference>
<dbReference type="UCSC" id="uc010tfk.3">
    <property type="organism name" value="human"/>
</dbReference>
<dbReference type="AGR" id="HGNC:26883"/>
<dbReference type="CTD" id="144809"/>
<dbReference type="GeneCards" id="FAM216B"/>
<dbReference type="HGNC" id="HGNC:26883">
    <property type="gene designation" value="FAM216B"/>
</dbReference>
<dbReference type="HPA" id="ENSG00000179813">
    <property type="expression patterns" value="Tissue enriched (fallopian)"/>
</dbReference>
<dbReference type="neXtProt" id="NX_Q8N7L0"/>
<dbReference type="OpenTargets" id="ENSG00000179813"/>
<dbReference type="PharmGKB" id="PA147358510"/>
<dbReference type="VEuPathDB" id="HostDB:ENSG00000179813"/>
<dbReference type="eggNOG" id="ENOG502SAWN">
    <property type="taxonomic scope" value="Eukaryota"/>
</dbReference>
<dbReference type="GeneTree" id="ENSGT00940000154512"/>
<dbReference type="HOGENOM" id="CLU_125533_0_0_1"/>
<dbReference type="InParanoid" id="Q8N7L0"/>
<dbReference type="OMA" id="RVPHSIY"/>
<dbReference type="OrthoDB" id="9902980at2759"/>
<dbReference type="PAN-GO" id="Q8N7L0">
    <property type="GO annotations" value="0 GO annotations based on evolutionary models"/>
</dbReference>
<dbReference type="PhylomeDB" id="Q8N7L0"/>
<dbReference type="TreeFam" id="TF337013"/>
<dbReference type="PathwayCommons" id="Q8N7L0"/>
<dbReference type="BioGRID-ORCS" id="144809">
    <property type="hits" value="14 hits in 1139 CRISPR screens"/>
</dbReference>
<dbReference type="GenomeRNAi" id="144809"/>
<dbReference type="Pharos" id="Q8N7L0">
    <property type="development level" value="Tdark"/>
</dbReference>
<dbReference type="PRO" id="PR:Q8N7L0"/>
<dbReference type="Proteomes" id="UP000005640">
    <property type="component" value="Chromosome 13"/>
</dbReference>
<dbReference type="RNAct" id="Q8N7L0">
    <property type="molecule type" value="protein"/>
</dbReference>
<dbReference type="Bgee" id="ENSG00000179813">
    <property type="expression patterns" value="Expressed in bronchial epithelial cell and 64 other cell types or tissues"/>
</dbReference>
<dbReference type="InterPro" id="IPR029373">
    <property type="entry name" value="FAM216"/>
</dbReference>
<dbReference type="PANTHER" id="PTHR16476">
    <property type="entry name" value="FAMILY WITH SEQUENCE SIMILARITY 216 MEMBER A"/>
    <property type="match status" value="1"/>
</dbReference>
<dbReference type="PANTHER" id="PTHR16476:SF3">
    <property type="entry name" value="PROTEIN FAM216B"/>
    <property type="match status" value="1"/>
</dbReference>
<dbReference type="Pfam" id="PF15107">
    <property type="entry name" value="FAM216B"/>
    <property type="match status" value="1"/>
</dbReference>
<gene>
    <name type="primary">FAM216B</name>
    <name type="synonym">C13orf30</name>
</gene>
<reference key="1">
    <citation type="journal article" date="2004" name="Nat. Genet.">
        <title>Complete sequencing and characterization of 21,243 full-length human cDNAs.</title>
        <authorList>
            <person name="Ota T."/>
            <person name="Suzuki Y."/>
            <person name="Nishikawa T."/>
            <person name="Otsuki T."/>
            <person name="Sugiyama T."/>
            <person name="Irie R."/>
            <person name="Wakamatsu A."/>
            <person name="Hayashi K."/>
            <person name="Sato H."/>
            <person name="Nagai K."/>
            <person name="Kimura K."/>
            <person name="Makita H."/>
            <person name="Sekine M."/>
            <person name="Obayashi M."/>
            <person name="Nishi T."/>
            <person name="Shibahara T."/>
            <person name="Tanaka T."/>
            <person name="Ishii S."/>
            <person name="Yamamoto J."/>
            <person name="Saito K."/>
            <person name="Kawai Y."/>
            <person name="Isono Y."/>
            <person name="Nakamura Y."/>
            <person name="Nagahari K."/>
            <person name="Murakami K."/>
            <person name="Yasuda T."/>
            <person name="Iwayanagi T."/>
            <person name="Wagatsuma M."/>
            <person name="Shiratori A."/>
            <person name="Sudo H."/>
            <person name="Hosoiri T."/>
            <person name="Kaku Y."/>
            <person name="Kodaira H."/>
            <person name="Kondo H."/>
            <person name="Sugawara M."/>
            <person name="Takahashi M."/>
            <person name="Kanda K."/>
            <person name="Yokoi T."/>
            <person name="Furuya T."/>
            <person name="Kikkawa E."/>
            <person name="Omura Y."/>
            <person name="Abe K."/>
            <person name="Kamihara K."/>
            <person name="Katsuta N."/>
            <person name="Sato K."/>
            <person name="Tanikawa M."/>
            <person name="Yamazaki M."/>
            <person name="Ninomiya K."/>
            <person name="Ishibashi T."/>
            <person name="Yamashita H."/>
            <person name="Murakawa K."/>
            <person name="Fujimori K."/>
            <person name="Tanai H."/>
            <person name="Kimata M."/>
            <person name="Watanabe M."/>
            <person name="Hiraoka S."/>
            <person name="Chiba Y."/>
            <person name="Ishida S."/>
            <person name="Ono Y."/>
            <person name="Takiguchi S."/>
            <person name="Watanabe S."/>
            <person name="Yosida M."/>
            <person name="Hotuta T."/>
            <person name="Kusano J."/>
            <person name="Kanehori K."/>
            <person name="Takahashi-Fujii A."/>
            <person name="Hara H."/>
            <person name="Tanase T.-O."/>
            <person name="Nomura Y."/>
            <person name="Togiya S."/>
            <person name="Komai F."/>
            <person name="Hara R."/>
            <person name="Takeuchi K."/>
            <person name="Arita M."/>
            <person name="Imose N."/>
            <person name="Musashino K."/>
            <person name="Yuuki H."/>
            <person name="Oshima A."/>
            <person name="Sasaki N."/>
            <person name="Aotsuka S."/>
            <person name="Yoshikawa Y."/>
            <person name="Matsunawa H."/>
            <person name="Ichihara T."/>
            <person name="Shiohata N."/>
            <person name="Sano S."/>
            <person name="Moriya S."/>
            <person name="Momiyama H."/>
            <person name="Satoh N."/>
            <person name="Takami S."/>
            <person name="Terashima Y."/>
            <person name="Suzuki O."/>
            <person name="Nakagawa S."/>
            <person name="Senoh A."/>
            <person name="Mizoguchi H."/>
            <person name="Goto Y."/>
            <person name="Shimizu F."/>
            <person name="Wakebe H."/>
            <person name="Hishigaki H."/>
            <person name="Watanabe T."/>
            <person name="Sugiyama A."/>
            <person name="Takemoto M."/>
            <person name="Kawakami B."/>
            <person name="Yamazaki M."/>
            <person name="Watanabe K."/>
            <person name="Kumagai A."/>
            <person name="Itakura S."/>
            <person name="Fukuzumi Y."/>
            <person name="Fujimori Y."/>
            <person name="Komiyama M."/>
            <person name="Tashiro H."/>
            <person name="Tanigami A."/>
            <person name="Fujiwara T."/>
            <person name="Ono T."/>
            <person name="Yamada K."/>
            <person name="Fujii Y."/>
            <person name="Ozaki K."/>
            <person name="Hirao M."/>
            <person name="Ohmori Y."/>
            <person name="Kawabata A."/>
            <person name="Hikiji T."/>
            <person name="Kobatake N."/>
            <person name="Inagaki H."/>
            <person name="Ikema Y."/>
            <person name="Okamoto S."/>
            <person name="Okitani R."/>
            <person name="Kawakami T."/>
            <person name="Noguchi S."/>
            <person name="Itoh T."/>
            <person name="Shigeta K."/>
            <person name="Senba T."/>
            <person name="Matsumura K."/>
            <person name="Nakajima Y."/>
            <person name="Mizuno T."/>
            <person name="Morinaga M."/>
            <person name="Sasaki M."/>
            <person name="Togashi T."/>
            <person name="Oyama M."/>
            <person name="Hata H."/>
            <person name="Watanabe M."/>
            <person name="Komatsu T."/>
            <person name="Mizushima-Sugano J."/>
            <person name="Satoh T."/>
            <person name="Shirai Y."/>
            <person name="Takahashi Y."/>
            <person name="Nakagawa K."/>
            <person name="Okumura K."/>
            <person name="Nagase T."/>
            <person name="Nomura N."/>
            <person name="Kikuchi H."/>
            <person name="Masuho Y."/>
            <person name="Yamashita R."/>
            <person name="Nakai K."/>
            <person name="Yada T."/>
            <person name="Nakamura Y."/>
            <person name="Ohara O."/>
            <person name="Isogai T."/>
            <person name="Sugano S."/>
        </authorList>
    </citation>
    <scope>NUCLEOTIDE SEQUENCE [LARGE SCALE MRNA]</scope>
    <source>
        <tissue>Uterus</tissue>
    </source>
</reference>
<reference key="2">
    <citation type="journal article" date="2004" name="Nature">
        <title>The DNA sequence and analysis of human chromosome 13.</title>
        <authorList>
            <person name="Dunham A."/>
            <person name="Matthews L.H."/>
            <person name="Burton J."/>
            <person name="Ashurst J.L."/>
            <person name="Howe K.L."/>
            <person name="Ashcroft K.J."/>
            <person name="Beare D.M."/>
            <person name="Burford D.C."/>
            <person name="Hunt S.E."/>
            <person name="Griffiths-Jones S."/>
            <person name="Jones M.C."/>
            <person name="Keenan S.J."/>
            <person name="Oliver K."/>
            <person name="Scott C.E."/>
            <person name="Ainscough R."/>
            <person name="Almeida J.P."/>
            <person name="Ambrose K.D."/>
            <person name="Andrews D.T."/>
            <person name="Ashwell R.I.S."/>
            <person name="Babbage A.K."/>
            <person name="Bagguley C.L."/>
            <person name="Bailey J."/>
            <person name="Bannerjee R."/>
            <person name="Barlow K.F."/>
            <person name="Bates K."/>
            <person name="Beasley H."/>
            <person name="Bird C.P."/>
            <person name="Bray-Allen S."/>
            <person name="Brown A.J."/>
            <person name="Brown J.Y."/>
            <person name="Burrill W."/>
            <person name="Carder C."/>
            <person name="Carter N.P."/>
            <person name="Chapman J.C."/>
            <person name="Clamp M.E."/>
            <person name="Clark S.Y."/>
            <person name="Clarke G."/>
            <person name="Clee C.M."/>
            <person name="Clegg S.C."/>
            <person name="Cobley V."/>
            <person name="Collins J.E."/>
            <person name="Corby N."/>
            <person name="Coville G.J."/>
            <person name="Deloukas P."/>
            <person name="Dhami P."/>
            <person name="Dunham I."/>
            <person name="Dunn M."/>
            <person name="Earthrowl M.E."/>
            <person name="Ellington A.G."/>
            <person name="Faulkner L."/>
            <person name="Frankish A.G."/>
            <person name="Frankland J."/>
            <person name="French L."/>
            <person name="Garner P."/>
            <person name="Garnett J."/>
            <person name="Gilbert J.G.R."/>
            <person name="Gilson C.J."/>
            <person name="Ghori J."/>
            <person name="Grafham D.V."/>
            <person name="Gribble S.M."/>
            <person name="Griffiths C."/>
            <person name="Hall R.E."/>
            <person name="Hammond S."/>
            <person name="Harley J.L."/>
            <person name="Hart E.A."/>
            <person name="Heath P.D."/>
            <person name="Howden P.J."/>
            <person name="Huckle E.J."/>
            <person name="Hunt P.J."/>
            <person name="Hunt A.R."/>
            <person name="Johnson C."/>
            <person name="Johnson D."/>
            <person name="Kay M."/>
            <person name="Kimberley A.M."/>
            <person name="King A."/>
            <person name="Laird G.K."/>
            <person name="Langford C.J."/>
            <person name="Lawlor S."/>
            <person name="Leongamornlert D.A."/>
            <person name="Lloyd D.M."/>
            <person name="Lloyd C."/>
            <person name="Loveland J.E."/>
            <person name="Lovell J."/>
            <person name="Martin S."/>
            <person name="Mashreghi-Mohammadi M."/>
            <person name="McLaren S.J."/>
            <person name="McMurray A."/>
            <person name="Milne S."/>
            <person name="Moore M.J.F."/>
            <person name="Nickerson T."/>
            <person name="Palmer S.A."/>
            <person name="Pearce A.V."/>
            <person name="Peck A.I."/>
            <person name="Pelan S."/>
            <person name="Phillimore B."/>
            <person name="Porter K.M."/>
            <person name="Rice C.M."/>
            <person name="Searle S."/>
            <person name="Sehra H.K."/>
            <person name="Shownkeen R."/>
            <person name="Skuce C.D."/>
            <person name="Smith M."/>
            <person name="Steward C.A."/>
            <person name="Sycamore N."/>
            <person name="Tester J."/>
            <person name="Thomas D.W."/>
            <person name="Tracey A."/>
            <person name="Tromans A."/>
            <person name="Tubby B."/>
            <person name="Wall M."/>
            <person name="Wallis J.M."/>
            <person name="West A.P."/>
            <person name="Whitehead S.L."/>
            <person name="Willey D.L."/>
            <person name="Wilming L."/>
            <person name="Wray P.W."/>
            <person name="Wright M.W."/>
            <person name="Young L."/>
            <person name="Coulson A."/>
            <person name="Durbin R.M."/>
            <person name="Hubbard T."/>
            <person name="Sulston J.E."/>
            <person name="Beck S."/>
            <person name="Bentley D.R."/>
            <person name="Rogers J."/>
            <person name="Ross M.T."/>
        </authorList>
    </citation>
    <scope>NUCLEOTIDE SEQUENCE [LARGE SCALE GENOMIC DNA]</scope>
</reference>
<reference key="3">
    <citation type="submission" date="2005-07" db="EMBL/GenBank/DDBJ databases">
        <authorList>
            <person name="Mural R.J."/>
            <person name="Istrail S."/>
            <person name="Sutton G.G."/>
            <person name="Florea L."/>
            <person name="Halpern A.L."/>
            <person name="Mobarry C.M."/>
            <person name="Lippert R."/>
            <person name="Walenz B."/>
            <person name="Shatkay H."/>
            <person name="Dew I."/>
            <person name="Miller J.R."/>
            <person name="Flanigan M.J."/>
            <person name="Edwards N.J."/>
            <person name="Bolanos R."/>
            <person name="Fasulo D."/>
            <person name="Halldorsson B.V."/>
            <person name="Hannenhalli S."/>
            <person name="Turner R."/>
            <person name="Yooseph S."/>
            <person name="Lu F."/>
            <person name="Nusskern D.R."/>
            <person name="Shue B.C."/>
            <person name="Zheng X.H."/>
            <person name="Zhong F."/>
            <person name="Delcher A.L."/>
            <person name="Huson D.H."/>
            <person name="Kravitz S.A."/>
            <person name="Mouchard L."/>
            <person name="Reinert K."/>
            <person name="Remington K.A."/>
            <person name="Clark A.G."/>
            <person name="Waterman M.S."/>
            <person name="Eichler E.E."/>
            <person name="Adams M.D."/>
            <person name="Hunkapiller M.W."/>
            <person name="Myers E.W."/>
            <person name="Venter J.C."/>
        </authorList>
    </citation>
    <scope>NUCLEOTIDE SEQUENCE [LARGE SCALE GENOMIC DNA]</scope>
</reference>
<reference key="4">
    <citation type="journal article" date="2004" name="Genome Res.">
        <title>The status, quality, and expansion of the NIH full-length cDNA project: the Mammalian Gene Collection (MGC).</title>
        <authorList>
            <consortium name="The MGC Project Team"/>
        </authorList>
    </citation>
    <scope>NUCLEOTIDE SEQUENCE [LARGE SCALE MRNA]</scope>
    <source>
        <tissue>Heart</tissue>
        <tissue>Lung</tissue>
    </source>
</reference>
<accession>Q8N7L0</accession>
<accession>B1ALI3</accession>
<keyword id="KW-1267">Proteomics identification</keyword>
<keyword id="KW-1185">Reference proteome</keyword>
<comment type="similarity">
    <text evidence="1">Belongs to the FAM216 family.</text>
</comment>
<protein>
    <recommendedName>
        <fullName>Protein FAM216B</fullName>
    </recommendedName>
</protein>